<gene>
    <name evidence="1" type="primary">miaB</name>
    <name type="ordered locus">Arth_1462</name>
</gene>
<evidence type="ECO:0000255" key="1">
    <source>
        <dbReference type="HAMAP-Rule" id="MF_01864"/>
    </source>
</evidence>
<evidence type="ECO:0000255" key="2">
    <source>
        <dbReference type="PROSITE-ProRule" id="PRU01266"/>
    </source>
</evidence>
<evidence type="ECO:0000256" key="3">
    <source>
        <dbReference type="SAM" id="MobiDB-lite"/>
    </source>
</evidence>
<organism>
    <name type="scientific">Arthrobacter sp. (strain FB24)</name>
    <dbReference type="NCBI Taxonomy" id="290399"/>
    <lineage>
        <taxon>Bacteria</taxon>
        <taxon>Bacillati</taxon>
        <taxon>Actinomycetota</taxon>
        <taxon>Actinomycetes</taxon>
        <taxon>Micrococcales</taxon>
        <taxon>Micrococcaceae</taxon>
        <taxon>Arthrobacter</taxon>
    </lineage>
</organism>
<feature type="chain" id="PRO_0000374118" description="tRNA-2-methylthio-N(6)-dimethylallyladenosine synthase">
    <location>
        <begin position="1"/>
        <end position="522"/>
    </location>
</feature>
<feature type="domain" description="MTTase N-terminal" evidence="1">
    <location>
        <begin position="28"/>
        <end position="143"/>
    </location>
</feature>
<feature type="domain" description="Radical SAM core" evidence="2">
    <location>
        <begin position="166"/>
        <end position="396"/>
    </location>
</feature>
<feature type="domain" description="TRAM" evidence="1">
    <location>
        <begin position="399"/>
        <end position="469"/>
    </location>
</feature>
<feature type="region of interest" description="Disordered" evidence="3">
    <location>
        <begin position="1"/>
        <end position="27"/>
    </location>
</feature>
<feature type="region of interest" description="Disordered" evidence="3">
    <location>
        <begin position="481"/>
        <end position="522"/>
    </location>
</feature>
<feature type="compositionally biased region" description="Low complexity" evidence="3">
    <location>
        <begin position="1"/>
        <end position="26"/>
    </location>
</feature>
<feature type="compositionally biased region" description="Gly residues" evidence="3">
    <location>
        <begin position="496"/>
        <end position="511"/>
    </location>
</feature>
<feature type="binding site" evidence="1">
    <location>
        <position position="37"/>
    </location>
    <ligand>
        <name>[4Fe-4S] cluster</name>
        <dbReference type="ChEBI" id="CHEBI:49883"/>
        <label>1</label>
    </ligand>
</feature>
<feature type="binding site" evidence="1">
    <location>
        <position position="72"/>
    </location>
    <ligand>
        <name>[4Fe-4S] cluster</name>
        <dbReference type="ChEBI" id="CHEBI:49883"/>
        <label>1</label>
    </ligand>
</feature>
<feature type="binding site" evidence="1">
    <location>
        <position position="106"/>
    </location>
    <ligand>
        <name>[4Fe-4S] cluster</name>
        <dbReference type="ChEBI" id="CHEBI:49883"/>
        <label>1</label>
    </ligand>
</feature>
<feature type="binding site" evidence="1">
    <location>
        <position position="180"/>
    </location>
    <ligand>
        <name>[4Fe-4S] cluster</name>
        <dbReference type="ChEBI" id="CHEBI:49883"/>
        <label>2</label>
        <note>4Fe-4S-S-AdoMet</note>
    </ligand>
</feature>
<feature type="binding site" evidence="1">
    <location>
        <position position="184"/>
    </location>
    <ligand>
        <name>[4Fe-4S] cluster</name>
        <dbReference type="ChEBI" id="CHEBI:49883"/>
        <label>2</label>
        <note>4Fe-4S-S-AdoMet</note>
    </ligand>
</feature>
<feature type="binding site" evidence="1">
    <location>
        <position position="187"/>
    </location>
    <ligand>
        <name>[4Fe-4S] cluster</name>
        <dbReference type="ChEBI" id="CHEBI:49883"/>
        <label>2</label>
        <note>4Fe-4S-S-AdoMet</note>
    </ligand>
</feature>
<accession>A0JUY6</accession>
<comment type="function">
    <text evidence="1">Catalyzes the methylthiolation of N6-(dimethylallyl)adenosine (i(6)A), leading to the formation of 2-methylthio-N6-(dimethylallyl)adenosine (ms(2)i(6)A) at position 37 in tRNAs that read codons beginning with uridine.</text>
</comment>
<comment type="catalytic activity">
    <reaction evidence="1">
        <text>N(6)-dimethylallyladenosine(37) in tRNA + (sulfur carrier)-SH + AH2 + 2 S-adenosyl-L-methionine = 2-methylsulfanyl-N(6)-dimethylallyladenosine(37) in tRNA + (sulfur carrier)-H + 5'-deoxyadenosine + L-methionine + A + S-adenosyl-L-homocysteine + 2 H(+)</text>
        <dbReference type="Rhea" id="RHEA:37067"/>
        <dbReference type="Rhea" id="RHEA-COMP:10375"/>
        <dbReference type="Rhea" id="RHEA-COMP:10376"/>
        <dbReference type="Rhea" id="RHEA-COMP:14737"/>
        <dbReference type="Rhea" id="RHEA-COMP:14739"/>
        <dbReference type="ChEBI" id="CHEBI:13193"/>
        <dbReference type="ChEBI" id="CHEBI:15378"/>
        <dbReference type="ChEBI" id="CHEBI:17319"/>
        <dbReference type="ChEBI" id="CHEBI:17499"/>
        <dbReference type="ChEBI" id="CHEBI:29917"/>
        <dbReference type="ChEBI" id="CHEBI:57844"/>
        <dbReference type="ChEBI" id="CHEBI:57856"/>
        <dbReference type="ChEBI" id="CHEBI:59789"/>
        <dbReference type="ChEBI" id="CHEBI:64428"/>
        <dbReference type="ChEBI" id="CHEBI:74415"/>
        <dbReference type="ChEBI" id="CHEBI:74417"/>
        <dbReference type="EC" id="2.8.4.3"/>
    </reaction>
</comment>
<comment type="cofactor">
    <cofactor evidence="1">
        <name>[4Fe-4S] cluster</name>
        <dbReference type="ChEBI" id="CHEBI:49883"/>
    </cofactor>
    <text evidence="1">Binds 2 [4Fe-4S] clusters. One cluster is coordinated with 3 cysteines and an exchangeable S-adenosyl-L-methionine.</text>
</comment>
<comment type="subunit">
    <text evidence="1">Monomer.</text>
</comment>
<comment type="subcellular location">
    <subcellularLocation>
        <location evidence="1">Cytoplasm</location>
    </subcellularLocation>
</comment>
<comment type="similarity">
    <text evidence="1">Belongs to the methylthiotransferase family. MiaB subfamily.</text>
</comment>
<keyword id="KW-0004">4Fe-4S</keyword>
<keyword id="KW-0963">Cytoplasm</keyword>
<keyword id="KW-0408">Iron</keyword>
<keyword id="KW-0411">Iron-sulfur</keyword>
<keyword id="KW-0479">Metal-binding</keyword>
<keyword id="KW-1185">Reference proteome</keyword>
<keyword id="KW-0949">S-adenosyl-L-methionine</keyword>
<keyword id="KW-0808">Transferase</keyword>
<keyword id="KW-0819">tRNA processing</keyword>
<protein>
    <recommendedName>
        <fullName evidence="1">tRNA-2-methylthio-N(6)-dimethylallyladenosine synthase</fullName>
        <ecNumber evidence="1">2.8.4.3</ecNumber>
    </recommendedName>
    <alternativeName>
        <fullName evidence="1">(Dimethylallyl)adenosine tRNA methylthiotransferase MiaB</fullName>
    </alternativeName>
    <alternativeName>
        <fullName evidence="1">tRNA-i(6)A37 methylthiotransferase</fullName>
    </alternativeName>
</protein>
<sequence length="522" mass="56105">MSLTIPSPASGTSTSATTDTAPAAAPQRTYQVRTFGCQMNVHDSERMAGMLEDAGYVPASGENADVVVFNTCAVRENADNKLYGNLGMLAPVKAANPGMQIAVGGCLAQKDRETILKKAPWVDAVFGTHNVGALPALLDRARHNNEAQLEILESLDVFPSTLPTKRDSVYSGWVSISVGCNNTCTFCIVPALRGKEKDRRPGDILAEIQALVDDGAIEVTLLGQNVNSYGVEFGDRQAFSKLLRACGEIQGLERVRFTSPHPAAFTDDVIDAMAETPNVMPQLHMPLQSGSDKVLKDMKRSYRSTKFLGILDKVRERIPHAAISTDIIVGFPGETEEDFQATLDVVEKSRFATAFTFQYSKRPGTPAADLPDQLPKAVVQERFERLTALQDRIAAEENARQLGRRVEVMVTAQSGRKSEETHRLSGRSQDQRLVHFSVPEGAEKPRPGDLVTVTITEAAAFHLVADPASAADYSLRRSRAGDAWDRSQADSCGAPVAGGGAGSNGGKGGVSLGMPALPVRRS</sequence>
<proteinExistence type="inferred from homology"/>
<dbReference type="EC" id="2.8.4.3" evidence="1"/>
<dbReference type="EMBL" id="CP000454">
    <property type="protein sequence ID" value="ABK02856.1"/>
    <property type="molecule type" value="Genomic_DNA"/>
</dbReference>
<dbReference type="RefSeq" id="WP_011691323.1">
    <property type="nucleotide sequence ID" value="NC_008541.1"/>
</dbReference>
<dbReference type="SMR" id="A0JUY6"/>
<dbReference type="STRING" id="290399.Arth_1462"/>
<dbReference type="KEGG" id="art:Arth_1462"/>
<dbReference type="eggNOG" id="COG0621">
    <property type="taxonomic scope" value="Bacteria"/>
</dbReference>
<dbReference type="HOGENOM" id="CLU_018697_2_2_11"/>
<dbReference type="OrthoDB" id="9805215at2"/>
<dbReference type="Proteomes" id="UP000000754">
    <property type="component" value="Chromosome"/>
</dbReference>
<dbReference type="GO" id="GO:0005829">
    <property type="term" value="C:cytosol"/>
    <property type="evidence" value="ECO:0007669"/>
    <property type="project" value="TreeGrafter"/>
</dbReference>
<dbReference type="GO" id="GO:0051539">
    <property type="term" value="F:4 iron, 4 sulfur cluster binding"/>
    <property type="evidence" value="ECO:0007669"/>
    <property type="project" value="UniProtKB-UniRule"/>
</dbReference>
<dbReference type="GO" id="GO:0046872">
    <property type="term" value="F:metal ion binding"/>
    <property type="evidence" value="ECO:0007669"/>
    <property type="project" value="UniProtKB-KW"/>
</dbReference>
<dbReference type="GO" id="GO:0035597">
    <property type="term" value="F:N6-isopentenyladenosine methylthiotransferase activity"/>
    <property type="evidence" value="ECO:0007669"/>
    <property type="project" value="TreeGrafter"/>
</dbReference>
<dbReference type="CDD" id="cd01335">
    <property type="entry name" value="Radical_SAM"/>
    <property type="match status" value="1"/>
</dbReference>
<dbReference type="FunFam" id="3.40.50.12160:FF:000003">
    <property type="entry name" value="CDK5 regulatory subunit-associated protein 1"/>
    <property type="match status" value="1"/>
</dbReference>
<dbReference type="FunFam" id="3.80.30.20:FF:000001">
    <property type="entry name" value="tRNA-2-methylthio-N(6)-dimethylallyladenosine synthase 2"/>
    <property type="match status" value="1"/>
</dbReference>
<dbReference type="Gene3D" id="3.40.50.12160">
    <property type="entry name" value="Methylthiotransferase, N-terminal domain"/>
    <property type="match status" value="1"/>
</dbReference>
<dbReference type="Gene3D" id="3.80.30.20">
    <property type="entry name" value="tm_1862 like domain"/>
    <property type="match status" value="1"/>
</dbReference>
<dbReference type="HAMAP" id="MF_01864">
    <property type="entry name" value="tRNA_metthiotr_MiaB"/>
    <property type="match status" value="1"/>
</dbReference>
<dbReference type="InterPro" id="IPR006638">
    <property type="entry name" value="Elp3/MiaA/NifB-like_rSAM"/>
</dbReference>
<dbReference type="InterPro" id="IPR005839">
    <property type="entry name" value="Methylthiotransferase"/>
</dbReference>
<dbReference type="InterPro" id="IPR020612">
    <property type="entry name" value="Methylthiotransferase_CS"/>
</dbReference>
<dbReference type="InterPro" id="IPR013848">
    <property type="entry name" value="Methylthiotransferase_N"/>
</dbReference>
<dbReference type="InterPro" id="IPR038135">
    <property type="entry name" value="Methylthiotransferase_N_sf"/>
</dbReference>
<dbReference type="InterPro" id="IPR006463">
    <property type="entry name" value="MiaB_methiolase"/>
</dbReference>
<dbReference type="InterPro" id="IPR007197">
    <property type="entry name" value="rSAM"/>
</dbReference>
<dbReference type="InterPro" id="IPR023404">
    <property type="entry name" value="rSAM_horseshoe"/>
</dbReference>
<dbReference type="InterPro" id="IPR002792">
    <property type="entry name" value="TRAM_dom"/>
</dbReference>
<dbReference type="NCBIfam" id="TIGR01574">
    <property type="entry name" value="miaB-methiolase"/>
    <property type="match status" value="1"/>
</dbReference>
<dbReference type="NCBIfam" id="TIGR00089">
    <property type="entry name" value="MiaB/RimO family radical SAM methylthiotransferase"/>
    <property type="match status" value="1"/>
</dbReference>
<dbReference type="PANTHER" id="PTHR43020">
    <property type="entry name" value="CDK5 REGULATORY SUBUNIT-ASSOCIATED PROTEIN 1"/>
    <property type="match status" value="1"/>
</dbReference>
<dbReference type="PANTHER" id="PTHR43020:SF2">
    <property type="entry name" value="MITOCHONDRIAL TRNA METHYLTHIOTRANSFERASE CDK5RAP1"/>
    <property type="match status" value="1"/>
</dbReference>
<dbReference type="Pfam" id="PF04055">
    <property type="entry name" value="Radical_SAM"/>
    <property type="match status" value="1"/>
</dbReference>
<dbReference type="Pfam" id="PF00919">
    <property type="entry name" value="UPF0004"/>
    <property type="match status" value="1"/>
</dbReference>
<dbReference type="SFLD" id="SFLDF00273">
    <property type="entry name" value="(dimethylallyl)adenosine_tRNA"/>
    <property type="match status" value="1"/>
</dbReference>
<dbReference type="SFLD" id="SFLDG01082">
    <property type="entry name" value="B12-binding_domain_containing"/>
    <property type="match status" value="1"/>
</dbReference>
<dbReference type="SFLD" id="SFLDG01061">
    <property type="entry name" value="methylthiotransferase"/>
    <property type="match status" value="1"/>
</dbReference>
<dbReference type="SMART" id="SM00729">
    <property type="entry name" value="Elp3"/>
    <property type="match status" value="1"/>
</dbReference>
<dbReference type="SUPFAM" id="SSF102114">
    <property type="entry name" value="Radical SAM enzymes"/>
    <property type="match status" value="1"/>
</dbReference>
<dbReference type="PROSITE" id="PS51449">
    <property type="entry name" value="MTTASE_N"/>
    <property type="match status" value="1"/>
</dbReference>
<dbReference type="PROSITE" id="PS01278">
    <property type="entry name" value="MTTASE_RADICAL"/>
    <property type="match status" value="1"/>
</dbReference>
<dbReference type="PROSITE" id="PS51918">
    <property type="entry name" value="RADICAL_SAM"/>
    <property type="match status" value="1"/>
</dbReference>
<dbReference type="PROSITE" id="PS50926">
    <property type="entry name" value="TRAM"/>
    <property type="match status" value="1"/>
</dbReference>
<reference key="1">
    <citation type="journal article" date="2013" name="Stand. Genomic Sci.">
        <title>Complete genome sequence of Arthrobacter sp. strain FB24.</title>
        <authorList>
            <person name="Nakatsu C.H."/>
            <person name="Barabote R."/>
            <person name="Thompson S."/>
            <person name="Bruce D."/>
            <person name="Detter C."/>
            <person name="Brettin T."/>
            <person name="Han C."/>
            <person name="Beasley F."/>
            <person name="Chen W."/>
            <person name="Konopka A."/>
            <person name="Xie G."/>
        </authorList>
    </citation>
    <scope>NUCLEOTIDE SEQUENCE [LARGE SCALE GENOMIC DNA]</scope>
    <source>
        <strain>FB24</strain>
    </source>
</reference>
<name>MIAB_ARTS2</name>